<name>UBIB_NEIMA</name>
<proteinExistence type="inferred from homology"/>
<dbReference type="EC" id="2.7.-.-" evidence="1"/>
<dbReference type="EMBL" id="AL157959">
    <property type="protein sequence ID" value="CAM07993.1"/>
    <property type="molecule type" value="Genomic_DNA"/>
</dbReference>
<dbReference type="PIR" id="G81917">
    <property type="entry name" value="G81917"/>
</dbReference>
<dbReference type="RefSeq" id="WP_002247156.1">
    <property type="nucleotide sequence ID" value="NC_003116.1"/>
</dbReference>
<dbReference type="SMR" id="Q9JVQ5"/>
<dbReference type="EnsemblBacteria" id="CAM07993">
    <property type="protein sequence ID" value="CAM07993"/>
    <property type="gene ID" value="NMA0741"/>
</dbReference>
<dbReference type="GeneID" id="93386626"/>
<dbReference type="KEGG" id="nma:NMA0741"/>
<dbReference type="HOGENOM" id="CLU_006533_0_0_4"/>
<dbReference type="UniPathway" id="UPA00232"/>
<dbReference type="Proteomes" id="UP000000626">
    <property type="component" value="Chromosome"/>
</dbReference>
<dbReference type="GO" id="GO:0005886">
    <property type="term" value="C:plasma membrane"/>
    <property type="evidence" value="ECO:0007669"/>
    <property type="project" value="UniProtKB-SubCell"/>
</dbReference>
<dbReference type="GO" id="GO:0005524">
    <property type="term" value="F:ATP binding"/>
    <property type="evidence" value="ECO:0007669"/>
    <property type="project" value="UniProtKB-KW"/>
</dbReference>
<dbReference type="GO" id="GO:0004672">
    <property type="term" value="F:protein kinase activity"/>
    <property type="evidence" value="ECO:0007669"/>
    <property type="project" value="UniProtKB-UniRule"/>
</dbReference>
<dbReference type="GO" id="GO:0010795">
    <property type="term" value="P:regulation of ubiquinone biosynthetic process"/>
    <property type="evidence" value="ECO:0007669"/>
    <property type="project" value="UniProtKB-UniRule"/>
</dbReference>
<dbReference type="GO" id="GO:0006744">
    <property type="term" value="P:ubiquinone biosynthetic process"/>
    <property type="evidence" value="ECO:0007669"/>
    <property type="project" value="UniProtKB-UniPathway"/>
</dbReference>
<dbReference type="CDD" id="cd13972">
    <property type="entry name" value="UbiB"/>
    <property type="match status" value="1"/>
</dbReference>
<dbReference type="Gene3D" id="1.10.510.10">
    <property type="entry name" value="Transferase(Phosphotransferase) domain 1"/>
    <property type="match status" value="1"/>
</dbReference>
<dbReference type="HAMAP" id="MF_00414">
    <property type="entry name" value="UbiB"/>
    <property type="match status" value="1"/>
</dbReference>
<dbReference type="InterPro" id="IPR004147">
    <property type="entry name" value="ABC1_dom"/>
</dbReference>
<dbReference type="InterPro" id="IPR011009">
    <property type="entry name" value="Kinase-like_dom_sf"/>
</dbReference>
<dbReference type="InterPro" id="IPR000719">
    <property type="entry name" value="Prot_kinase_dom"/>
</dbReference>
<dbReference type="InterPro" id="IPR010232">
    <property type="entry name" value="UbiB"/>
</dbReference>
<dbReference type="InterPro" id="IPR045308">
    <property type="entry name" value="UbiB_bact"/>
</dbReference>
<dbReference type="InterPro" id="IPR050154">
    <property type="entry name" value="UbiB_kinase"/>
</dbReference>
<dbReference type="NCBIfam" id="NF003404">
    <property type="entry name" value="PRK04750.1"/>
    <property type="match status" value="1"/>
</dbReference>
<dbReference type="NCBIfam" id="TIGR01982">
    <property type="entry name" value="UbiB"/>
    <property type="match status" value="1"/>
</dbReference>
<dbReference type="PANTHER" id="PTHR10566">
    <property type="entry name" value="CHAPERONE-ACTIVITY OF BC1 COMPLEX CABC1 -RELATED"/>
    <property type="match status" value="1"/>
</dbReference>
<dbReference type="PANTHER" id="PTHR10566:SF113">
    <property type="entry name" value="PROTEIN ACTIVITY OF BC1 COMPLEX KINASE 7, CHLOROPLASTIC"/>
    <property type="match status" value="1"/>
</dbReference>
<dbReference type="Pfam" id="PF03109">
    <property type="entry name" value="ABC1"/>
    <property type="match status" value="1"/>
</dbReference>
<dbReference type="SUPFAM" id="SSF56112">
    <property type="entry name" value="Protein kinase-like (PK-like)"/>
    <property type="match status" value="1"/>
</dbReference>
<dbReference type="PROSITE" id="PS50011">
    <property type="entry name" value="PROTEIN_KINASE_DOM"/>
    <property type="match status" value="1"/>
</dbReference>
<feature type="chain" id="PRO_0000200708" description="Probable protein kinase UbiB">
    <location>
        <begin position="1"/>
        <end position="503"/>
    </location>
</feature>
<feature type="transmembrane region" description="Helical" evidence="1">
    <location>
        <begin position="13"/>
        <end position="35"/>
    </location>
</feature>
<feature type="transmembrane region" description="Helical" evidence="1">
    <location>
        <begin position="485"/>
        <end position="502"/>
    </location>
</feature>
<feature type="domain" description="Protein kinase" evidence="1">
    <location>
        <begin position="120"/>
        <end position="491"/>
    </location>
</feature>
<feature type="active site" description="Proton acceptor" evidence="1">
    <location>
        <position position="283"/>
    </location>
</feature>
<feature type="binding site" evidence="1">
    <location>
        <begin position="126"/>
        <end position="134"/>
    </location>
    <ligand>
        <name>ATP</name>
        <dbReference type="ChEBI" id="CHEBI:30616"/>
    </ligand>
</feature>
<feature type="binding site" evidence="1">
    <location>
        <position position="148"/>
    </location>
    <ligand>
        <name>ATP</name>
        <dbReference type="ChEBI" id="CHEBI:30616"/>
    </ligand>
</feature>
<accession>Q9JVQ5</accession>
<accession>A1IQG2</accession>
<keyword id="KW-0067">ATP-binding</keyword>
<keyword id="KW-0997">Cell inner membrane</keyword>
<keyword id="KW-1003">Cell membrane</keyword>
<keyword id="KW-0418">Kinase</keyword>
<keyword id="KW-0472">Membrane</keyword>
<keyword id="KW-0547">Nucleotide-binding</keyword>
<keyword id="KW-0808">Transferase</keyword>
<keyword id="KW-0812">Transmembrane</keyword>
<keyword id="KW-1133">Transmembrane helix</keyword>
<keyword id="KW-0831">Ubiquinone biosynthesis</keyword>
<protein>
    <recommendedName>
        <fullName evidence="1">Probable protein kinase UbiB</fullName>
        <ecNumber evidence="1">2.7.-.-</ecNumber>
    </recommendedName>
    <alternativeName>
        <fullName evidence="1">Ubiquinone biosynthesis protein UbiB</fullName>
    </alternativeName>
</protein>
<sequence length="503" mass="57315">MKWLKRLTVIVGTFYRYRLAGLCASLMGSGWICALLKMMPQSSKLKNEPPAVRLRLALESLGPIFIKFGQVLSTRPDLIPHDYAVELAKLQDKVPPFDARLSREQIEKSLGQSIEKLYAEFETEPIASASIAQVHKARLHSGERVAVKVLRPNLLPLIEQDLSLMRFGAAWVERLFSDGRRLKPLEVVAEFDKYLHDELDLMREAANAGQLGRNFHNSNMLIVPKVFYDYCTSDVLTIEWMDGTPVADIAKLKADGIDLHKLADYGVEIFFTQVFRDGFFHADMHPGNILVAADNRYIALDFGIVGTLTDYDKRYLAINFLAFFNRDYRRVATAHIESGWVPADTRAEELEAAVRAVCEPVFNKPISQISFGLVLMRLFEVSRRFNVEIQPQLVLLQKTLLNIEGLGRQLDPDLDLWKTAKPFLVKWMNGQVGPKALWRNLKNEAPDWAQIIPSLPRKISALIDENRQQEMRDAYIHLVKVQQRQSLWLAVIAVVLLLILLLK</sequence>
<comment type="function">
    <text evidence="1">Is probably a protein kinase regulator of UbiI activity which is involved in aerobic coenzyme Q (ubiquinone) biosynthesis.</text>
</comment>
<comment type="pathway">
    <text>Cofactor biosynthesis; ubiquinone biosynthesis [regulation].</text>
</comment>
<comment type="subcellular location">
    <subcellularLocation>
        <location evidence="1">Cell inner membrane</location>
        <topology evidence="1">Multi-pass membrane protein</topology>
    </subcellularLocation>
</comment>
<comment type="similarity">
    <text evidence="1">Belongs to the ABC1 family. UbiB subfamily.</text>
</comment>
<gene>
    <name evidence="1" type="primary">ubiB</name>
    <name type="ordered locus">NMA0741</name>
</gene>
<reference key="1">
    <citation type="journal article" date="2000" name="Nature">
        <title>Complete DNA sequence of a serogroup A strain of Neisseria meningitidis Z2491.</title>
        <authorList>
            <person name="Parkhill J."/>
            <person name="Achtman M."/>
            <person name="James K.D."/>
            <person name="Bentley S.D."/>
            <person name="Churcher C.M."/>
            <person name="Klee S.R."/>
            <person name="Morelli G."/>
            <person name="Basham D."/>
            <person name="Brown D."/>
            <person name="Chillingworth T."/>
            <person name="Davies R.M."/>
            <person name="Davis P."/>
            <person name="Devlin K."/>
            <person name="Feltwell T."/>
            <person name="Hamlin N."/>
            <person name="Holroyd S."/>
            <person name="Jagels K."/>
            <person name="Leather S."/>
            <person name="Moule S."/>
            <person name="Mungall K.L."/>
            <person name="Quail M.A."/>
            <person name="Rajandream M.A."/>
            <person name="Rutherford K.M."/>
            <person name="Simmonds M."/>
            <person name="Skelton J."/>
            <person name="Whitehead S."/>
            <person name="Spratt B.G."/>
            <person name="Barrell B.G."/>
        </authorList>
    </citation>
    <scope>NUCLEOTIDE SEQUENCE [LARGE SCALE GENOMIC DNA]</scope>
    <source>
        <strain>DSM 15465 / Z2491</strain>
    </source>
</reference>
<evidence type="ECO:0000255" key="1">
    <source>
        <dbReference type="HAMAP-Rule" id="MF_00414"/>
    </source>
</evidence>
<organism>
    <name type="scientific">Neisseria meningitidis serogroup A / serotype 4A (strain DSM 15465 / Z2491)</name>
    <dbReference type="NCBI Taxonomy" id="122587"/>
    <lineage>
        <taxon>Bacteria</taxon>
        <taxon>Pseudomonadati</taxon>
        <taxon>Pseudomonadota</taxon>
        <taxon>Betaproteobacteria</taxon>
        <taxon>Neisseriales</taxon>
        <taxon>Neisseriaceae</taxon>
        <taxon>Neisseria</taxon>
    </lineage>
</organism>